<accession>B5Y1R1</accession>
<organism>
    <name type="scientific">Klebsiella pneumoniae (strain 342)</name>
    <dbReference type="NCBI Taxonomy" id="507522"/>
    <lineage>
        <taxon>Bacteria</taxon>
        <taxon>Pseudomonadati</taxon>
        <taxon>Pseudomonadota</taxon>
        <taxon>Gammaproteobacteria</taxon>
        <taxon>Enterobacterales</taxon>
        <taxon>Enterobacteriaceae</taxon>
        <taxon>Klebsiella/Raoultella group</taxon>
        <taxon>Klebsiella</taxon>
        <taxon>Klebsiella pneumoniae complex</taxon>
    </lineage>
</organism>
<feature type="chain" id="PRO_1000099289" description="Polyamine aminopropyltransferase">
    <location>
        <begin position="1"/>
        <end position="286"/>
    </location>
</feature>
<feature type="domain" description="PABS" evidence="1">
    <location>
        <begin position="5"/>
        <end position="238"/>
    </location>
</feature>
<feature type="active site" description="Proton acceptor" evidence="1">
    <location>
        <position position="158"/>
    </location>
</feature>
<feature type="binding site" evidence="1">
    <location>
        <position position="33"/>
    </location>
    <ligand>
        <name>S-methyl-5'-thioadenosine</name>
        <dbReference type="ChEBI" id="CHEBI:17509"/>
    </ligand>
</feature>
<feature type="binding site" evidence="1">
    <location>
        <position position="64"/>
    </location>
    <ligand>
        <name>spermidine</name>
        <dbReference type="ChEBI" id="CHEBI:57834"/>
    </ligand>
</feature>
<feature type="binding site" evidence="1">
    <location>
        <position position="88"/>
    </location>
    <ligand>
        <name>spermidine</name>
        <dbReference type="ChEBI" id="CHEBI:57834"/>
    </ligand>
</feature>
<feature type="binding site" evidence="1">
    <location>
        <position position="108"/>
    </location>
    <ligand>
        <name>S-methyl-5'-thioadenosine</name>
        <dbReference type="ChEBI" id="CHEBI:17509"/>
    </ligand>
</feature>
<feature type="binding site" evidence="1">
    <location>
        <begin position="140"/>
        <end position="141"/>
    </location>
    <ligand>
        <name>S-methyl-5'-thioadenosine</name>
        <dbReference type="ChEBI" id="CHEBI:17509"/>
    </ligand>
</feature>
<feature type="binding site" evidence="1">
    <location>
        <begin position="158"/>
        <end position="161"/>
    </location>
    <ligand>
        <name>spermidine</name>
        <dbReference type="ChEBI" id="CHEBI:57834"/>
    </ligand>
</feature>
<feature type="binding site" evidence="1">
    <location>
        <position position="165"/>
    </location>
    <ligand>
        <name>S-methyl-5'-thioadenosine</name>
        <dbReference type="ChEBI" id="CHEBI:17509"/>
    </ligand>
</feature>
<protein>
    <recommendedName>
        <fullName evidence="1">Polyamine aminopropyltransferase</fullName>
    </recommendedName>
    <alternativeName>
        <fullName evidence="1">Putrescine aminopropyltransferase</fullName>
        <shortName evidence="1">PAPT</shortName>
    </alternativeName>
    <alternativeName>
        <fullName evidence="1">Spermidine synthase</fullName>
        <shortName evidence="1">SPDS</shortName>
        <shortName evidence="1">SPDSY</shortName>
        <ecNumber evidence="1">2.5.1.16</ecNumber>
    </alternativeName>
</protein>
<reference key="1">
    <citation type="journal article" date="2008" name="PLoS Genet.">
        <title>Complete genome sequence of the N2-fixing broad host range endophyte Klebsiella pneumoniae 342 and virulence predictions verified in mice.</title>
        <authorList>
            <person name="Fouts D.E."/>
            <person name="Tyler H.L."/>
            <person name="DeBoy R.T."/>
            <person name="Daugherty S."/>
            <person name="Ren Q."/>
            <person name="Badger J.H."/>
            <person name="Durkin A.S."/>
            <person name="Huot H."/>
            <person name="Shrivastava S."/>
            <person name="Kothari S."/>
            <person name="Dodson R.J."/>
            <person name="Mohamoud Y."/>
            <person name="Khouri H."/>
            <person name="Roesch L.F.W."/>
            <person name="Krogfelt K.A."/>
            <person name="Struve C."/>
            <person name="Triplett E.W."/>
            <person name="Methe B.A."/>
        </authorList>
    </citation>
    <scope>NUCLEOTIDE SEQUENCE [LARGE SCALE GENOMIC DNA]</scope>
    <source>
        <strain>342</strain>
    </source>
</reference>
<name>SPEE_KLEP3</name>
<evidence type="ECO:0000255" key="1">
    <source>
        <dbReference type="HAMAP-Rule" id="MF_00198"/>
    </source>
</evidence>
<keyword id="KW-0963">Cytoplasm</keyword>
<keyword id="KW-0620">Polyamine biosynthesis</keyword>
<keyword id="KW-0745">Spermidine biosynthesis</keyword>
<keyword id="KW-0808">Transferase</keyword>
<sequence length="286" mass="32153">MADNPLWHETLHDHFGQYFSVDNVLYHEKTDHQDLIIFDNRAFGRVMALDGVVQTTERDEFIYHEMMTHVPLLAHGNAKHVLIIGGGDGAMLREVSRHRSIETITMVEIDAGVVSFCRQYLPNHSAGAYDDPRFTLVIDDGVNFVNQTTQTFDVIISDCTDPIGPGESLFTSAFYEGCKRCLNPGGVFVAQNGVCFLQQDEAVGSHRKLSHYFRDVSFYQAAIPTYYGGIMTFAWASDNEALRHLSSEIIQARFHKANLTCRYYNPAIHTAAFALPQYLHDALSAP</sequence>
<proteinExistence type="inferred from homology"/>
<dbReference type="EC" id="2.5.1.16" evidence="1"/>
<dbReference type="EMBL" id="CP000964">
    <property type="protein sequence ID" value="ACI09580.1"/>
    <property type="molecule type" value="Genomic_DNA"/>
</dbReference>
<dbReference type="SMR" id="B5Y1R1"/>
<dbReference type="KEGG" id="kpe:KPK_4611"/>
<dbReference type="HOGENOM" id="CLU_048199_0_0_6"/>
<dbReference type="UniPathway" id="UPA00248">
    <property type="reaction ID" value="UER00314"/>
</dbReference>
<dbReference type="Proteomes" id="UP000001734">
    <property type="component" value="Chromosome"/>
</dbReference>
<dbReference type="GO" id="GO:0005829">
    <property type="term" value="C:cytosol"/>
    <property type="evidence" value="ECO:0007669"/>
    <property type="project" value="TreeGrafter"/>
</dbReference>
<dbReference type="GO" id="GO:0004766">
    <property type="term" value="F:spermidine synthase activity"/>
    <property type="evidence" value="ECO:0007669"/>
    <property type="project" value="UniProtKB-UniRule"/>
</dbReference>
<dbReference type="GO" id="GO:0008295">
    <property type="term" value="P:spermidine biosynthetic process"/>
    <property type="evidence" value="ECO:0007669"/>
    <property type="project" value="UniProtKB-UniRule"/>
</dbReference>
<dbReference type="CDD" id="cd02440">
    <property type="entry name" value="AdoMet_MTases"/>
    <property type="match status" value="1"/>
</dbReference>
<dbReference type="FunFam" id="2.30.140.10:FF:000002">
    <property type="entry name" value="Polyamine aminopropyltransferase"/>
    <property type="match status" value="1"/>
</dbReference>
<dbReference type="FunFam" id="3.40.50.150:FF:000026">
    <property type="entry name" value="Polyamine aminopropyltransferase"/>
    <property type="match status" value="1"/>
</dbReference>
<dbReference type="Gene3D" id="2.30.140.10">
    <property type="entry name" value="Spermidine synthase, tetramerisation domain"/>
    <property type="match status" value="1"/>
</dbReference>
<dbReference type="Gene3D" id="3.40.50.150">
    <property type="entry name" value="Vaccinia Virus protein VP39"/>
    <property type="match status" value="1"/>
</dbReference>
<dbReference type="HAMAP" id="MF_00198">
    <property type="entry name" value="Spermidine_synth"/>
    <property type="match status" value="1"/>
</dbReference>
<dbReference type="InterPro" id="IPR030374">
    <property type="entry name" value="PABS"/>
</dbReference>
<dbReference type="InterPro" id="IPR030373">
    <property type="entry name" value="PABS_CS"/>
</dbReference>
<dbReference type="InterPro" id="IPR029063">
    <property type="entry name" value="SAM-dependent_MTases_sf"/>
</dbReference>
<dbReference type="InterPro" id="IPR001045">
    <property type="entry name" value="Spermi_synthase"/>
</dbReference>
<dbReference type="InterPro" id="IPR035246">
    <property type="entry name" value="Spermidine_synt_N"/>
</dbReference>
<dbReference type="InterPro" id="IPR037163">
    <property type="entry name" value="Spermidine_synt_N_sf"/>
</dbReference>
<dbReference type="NCBIfam" id="NF037959">
    <property type="entry name" value="MFS_SpdSyn"/>
    <property type="match status" value="1"/>
</dbReference>
<dbReference type="NCBIfam" id="NF002010">
    <property type="entry name" value="PRK00811.1"/>
    <property type="match status" value="1"/>
</dbReference>
<dbReference type="NCBIfam" id="TIGR00417">
    <property type="entry name" value="speE"/>
    <property type="match status" value="1"/>
</dbReference>
<dbReference type="PANTHER" id="PTHR11558:SF11">
    <property type="entry name" value="SPERMIDINE SYNTHASE"/>
    <property type="match status" value="1"/>
</dbReference>
<dbReference type="PANTHER" id="PTHR11558">
    <property type="entry name" value="SPERMIDINE/SPERMINE SYNTHASE"/>
    <property type="match status" value="1"/>
</dbReference>
<dbReference type="Pfam" id="PF17284">
    <property type="entry name" value="Spermine_synt_N"/>
    <property type="match status" value="1"/>
</dbReference>
<dbReference type="Pfam" id="PF01564">
    <property type="entry name" value="Spermine_synth"/>
    <property type="match status" value="1"/>
</dbReference>
<dbReference type="SUPFAM" id="SSF53335">
    <property type="entry name" value="S-adenosyl-L-methionine-dependent methyltransferases"/>
    <property type="match status" value="1"/>
</dbReference>
<dbReference type="PROSITE" id="PS01330">
    <property type="entry name" value="PABS_1"/>
    <property type="match status" value="1"/>
</dbReference>
<dbReference type="PROSITE" id="PS51006">
    <property type="entry name" value="PABS_2"/>
    <property type="match status" value="1"/>
</dbReference>
<comment type="function">
    <text evidence="1">Catalyzes the irreversible transfer of a propylamine group from the amino donor S-adenosylmethioninamine (decarboxy-AdoMet) to putrescine (1,4-diaminobutane) to yield spermidine.</text>
</comment>
<comment type="catalytic activity">
    <reaction evidence="1">
        <text>S-adenosyl 3-(methylsulfanyl)propylamine + putrescine = S-methyl-5'-thioadenosine + spermidine + H(+)</text>
        <dbReference type="Rhea" id="RHEA:12721"/>
        <dbReference type="ChEBI" id="CHEBI:15378"/>
        <dbReference type="ChEBI" id="CHEBI:17509"/>
        <dbReference type="ChEBI" id="CHEBI:57443"/>
        <dbReference type="ChEBI" id="CHEBI:57834"/>
        <dbReference type="ChEBI" id="CHEBI:326268"/>
        <dbReference type="EC" id="2.5.1.16"/>
    </reaction>
</comment>
<comment type="pathway">
    <text evidence="1">Amine and polyamine biosynthesis; spermidine biosynthesis; spermidine from putrescine: step 1/1.</text>
</comment>
<comment type="subunit">
    <text evidence="1">Homodimer or homotetramer.</text>
</comment>
<comment type="subcellular location">
    <subcellularLocation>
        <location evidence="1">Cytoplasm</location>
    </subcellularLocation>
</comment>
<comment type="similarity">
    <text evidence="1">Belongs to the spermidine/spermine synthase family.</text>
</comment>
<gene>
    <name evidence="1" type="primary">speE</name>
    <name type="ordered locus">KPK_4611</name>
</gene>